<proteinExistence type="evidence at protein level"/>
<reference key="1">
    <citation type="journal article" date="2003" name="Genome Res.">
        <title>The secreted protein discovery initiative (SPDI), a large-scale effort to identify novel human secreted and transmembrane proteins: a bioinformatics assessment.</title>
        <authorList>
            <person name="Clark H.F."/>
            <person name="Gurney A.L."/>
            <person name="Abaya E."/>
            <person name="Baker K."/>
            <person name="Baldwin D.T."/>
            <person name="Brush J."/>
            <person name="Chen J."/>
            <person name="Chow B."/>
            <person name="Chui C."/>
            <person name="Crowley C."/>
            <person name="Currell B."/>
            <person name="Deuel B."/>
            <person name="Dowd P."/>
            <person name="Eaton D."/>
            <person name="Foster J.S."/>
            <person name="Grimaldi C."/>
            <person name="Gu Q."/>
            <person name="Hass P.E."/>
            <person name="Heldens S."/>
            <person name="Huang A."/>
            <person name="Kim H.S."/>
            <person name="Klimowski L."/>
            <person name="Jin Y."/>
            <person name="Johnson S."/>
            <person name="Lee J."/>
            <person name="Lewis L."/>
            <person name="Liao D."/>
            <person name="Mark M.R."/>
            <person name="Robbie E."/>
            <person name="Sanchez C."/>
            <person name="Schoenfeld J."/>
            <person name="Seshagiri S."/>
            <person name="Simmons L."/>
            <person name="Singh J."/>
            <person name="Smith V."/>
            <person name="Stinson J."/>
            <person name="Vagts A."/>
            <person name="Vandlen R.L."/>
            <person name="Watanabe C."/>
            <person name="Wieand D."/>
            <person name="Woods K."/>
            <person name="Xie M.-H."/>
            <person name="Yansura D.G."/>
            <person name="Yi S."/>
            <person name="Yu G."/>
            <person name="Yuan J."/>
            <person name="Zhang M."/>
            <person name="Zhang Z."/>
            <person name="Goddard A.D."/>
            <person name="Wood W.I."/>
            <person name="Godowski P.J."/>
            <person name="Gray A.M."/>
        </authorList>
    </citation>
    <scope>NUCLEOTIDE SEQUENCE [LARGE SCALE MRNA] (ISOFORM 1)</scope>
</reference>
<reference key="2">
    <citation type="journal article" date="2004" name="Nat. Genet.">
        <title>Complete sequencing and characterization of 21,243 full-length human cDNAs.</title>
        <authorList>
            <person name="Ota T."/>
            <person name="Suzuki Y."/>
            <person name="Nishikawa T."/>
            <person name="Otsuki T."/>
            <person name="Sugiyama T."/>
            <person name="Irie R."/>
            <person name="Wakamatsu A."/>
            <person name="Hayashi K."/>
            <person name="Sato H."/>
            <person name="Nagai K."/>
            <person name="Kimura K."/>
            <person name="Makita H."/>
            <person name="Sekine M."/>
            <person name="Obayashi M."/>
            <person name="Nishi T."/>
            <person name="Shibahara T."/>
            <person name="Tanaka T."/>
            <person name="Ishii S."/>
            <person name="Yamamoto J."/>
            <person name="Saito K."/>
            <person name="Kawai Y."/>
            <person name="Isono Y."/>
            <person name="Nakamura Y."/>
            <person name="Nagahari K."/>
            <person name="Murakami K."/>
            <person name="Yasuda T."/>
            <person name="Iwayanagi T."/>
            <person name="Wagatsuma M."/>
            <person name="Shiratori A."/>
            <person name="Sudo H."/>
            <person name="Hosoiri T."/>
            <person name="Kaku Y."/>
            <person name="Kodaira H."/>
            <person name="Kondo H."/>
            <person name="Sugawara M."/>
            <person name="Takahashi M."/>
            <person name="Kanda K."/>
            <person name="Yokoi T."/>
            <person name="Furuya T."/>
            <person name="Kikkawa E."/>
            <person name="Omura Y."/>
            <person name="Abe K."/>
            <person name="Kamihara K."/>
            <person name="Katsuta N."/>
            <person name="Sato K."/>
            <person name="Tanikawa M."/>
            <person name="Yamazaki M."/>
            <person name="Ninomiya K."/>
            <person name="Ishibashi T."/>
            <person name="Yamashita H."/>
            <person name="Murakawa K."/>
            <person name="Fujimori K."/>
            <person name="Tanai H."/>
            <person name="Kimata M."/>
            <person name="Watanabe M."/>
            <person name="Hiraoka S."/>
            <person name="Chiba Y."/>
            <person name="Ishida S."/>
            <person name="Ono Y."/>
            <person name="Takiguchi S."/>
            <person name="Watanabe S."/>
            <person name="Yosida M."/>
            <person name="Hotuta T."/>
            <person name="Kusano J."/>
            <person name="Kanehori K."/>
            <person name="Takahashi-Fujii A."/>
            <person name="Hara H."/>
            <person name="Tanase T.-O."/>
            <person name="Nomura Y."/>
            <person name="Togiya S."/>
            <person name="Komai F."/>
            <person name="Hara R."/>
            <person name="Takeuchi K."/>
            <person name="Arita M."/>
            <person name="Imose N."/>
            <person name="Musashino K."/>
            <person name="Yuuki H."/>
            <person name="Oshima A."/>
            <person name="Sasaki N."/>
            <person name="Aotsuka S."/>
            <person name="Yoshikawa Y."/>
            <person name="Matsunawa H."/>
            <person name="Ichihara T."/>
            <person name="Shiohata N."/>
            <person name="Sano S."/>
            <person name="Moriya S."/>
            <person name="Momiyama H."/>
            <person name="Satoh N."/>
            <person name="Takami S."/>
            <person name="Terashima Y."/>
            <person name="Suzuki O."/>
            <person name="Nakagawa S."/>
            <person name="Senoh A."/>
            <person name="Mizoguchi H."/>
            <person name="Goto Y."/>
            <person name="Shimizu F."/>
            <person name="Wakebe H."/>
            <person name="Hishigaki H."/>
            <person name="Watanabe T."/>
            <person name="Sugiyama A."/>
            <person name="Takemoto M."/>
            <person name="Kawakami B."/>
            <person name="Yamazaki M."/>
            <person name="Watanabe K."/>
            <person name="Kumagai A."/>
            <person name="Itakura S."/>
            <person name="Fukuzumi Y."/>
            <person name="Fujimori Y."/>
            <person name="Komiyama M."/>
            <person name="Tashiro H."/>
            <person name="Tanigami A."/>
            <person name="Fujiwara T."/>
            <person name="Ono T."/>
            <person name="Yamada K."/>
            <person name="Fujii Y."/>
            <person name="Ozaki K."/>
            <person name="Hirao M."/>
            <person name="Ohmori Y."/>
            <person name="Kawabata A."/>
            <person name="Hikiji T."/>
            <person name="Kobatake N."/>
            <person name="Inagaki H."/>
            <person name="Ikema Y."/>
            <person name="Okamoto S."/>
            <person name="Okitani R."/>
            <person name="Kawakami T."/>
            <person name="Noguchi S."/>
            <person name="Itoh T."/>
            <person name="Shigeta K."/>
            <person name="Senba T."/>
            <person name="Matsumura K."/>
            <person name="Nakajima Y."/>
            <person name="Mizuno T."/>
            <person name="Morinaga M."/>
            <person name="Sasaki M."/>
            <person name="Togashi T."/>
            <person name="Oyama M."/>
            <person name="Hata H."/>
            <person name="Watanabe M."/>
            <person name="Komatsu T."/>
            <person name="Mizushima-Sugano J."/>
            <person name="Satoh T."/>
            <person name="Shirai Y."/>
            <person name="Takahashi Y."/>
            <person name="Nakagawa K."/>
            <person name="Okumura K."/>
            <person name="Nagase T."/>
            <person name="Nomura N."/>
            <person name="Kikuchi H."/>
            <person name="Masuho Y."/>
            <person name="Yamashita R."/>
            <person name="Nakai K."/>
            <person name="Yada T."/>
            <person name="Nakamura Y."/>
            <person name="Ohara O."/>
            <person name="Isogai T."/>
            <person name="Sugano S."/>
        </authorList>
    </citation>
    <scope>NUCLEOTIDE SEQUENCE [LARGE SCALE MRNA] (ISOFORM 1)</scope>
    <source>
        <tissue>Skeletal muscle</tissue>
    </source>
</reference>
<reference key="3">
    <citation type="journal article" date="2006" name="Nature">
        <title>The DNA sequence and biological annotation of human chromosome 1.</title>
        <authorList>
            <person name="Gregory S.G."/>
            <person name="Barlow K.F."/>
            <person name="McLay K.E."/>
            <person name="Kaul R."/>
            <person name="Swarbreck D."/>
            <person name="Dunham A."/>
            <person name="Scott C.E."/>
            <person name="Howe K.L."/>
            <person name="Woodfine K."/>
            <person name="Spencer C.C.A."/>
            <person name="Jones M.C."/>
            <person name="Gillson C."/>
            <person name="Searle S."/>
            <person name="Zhou Y."/>
            <person name="Kokocinski F."/>
            <person name="McDonald L."/>
            <person name="Evans R."/>
            <person name="Phillips K."/>
            <person name="Atkinson A."/>
            <person name="Cooper R."/>
            <person name="Jones C."/>
            <person name="Hall R.E."/>
            <person name="Andrews T.D."/>
            <person name="Lloyd C."/>
            <person name="Ainscough R."/>
            <person name="Almeida J.P."/>
            <person name="Ambrose K.D."/>
            <person name="Anderson F."/>
            <person name="Andrew R.W."/>
            <person name="Ashwell R.I.S."/>
            <person name="Aubin K."/>
            <person name="Babbage A.K."/>
            <person name="Bagguley C.L."/>
            <person name="Bailey J."/>
            <person name="Beasley H."/>
            <person name="Bethel G."/>
            <person name="Bird C.P."/>
            <person name="Bray-Allen S."/>
            <person name="Brown J.Y."/>
            <person name="Brown A.J."/>
            <person name="Buckley D."/>
            <person name="Burton J."/>
            <person name="Bye J."/>
            <person name="Carder C."/>
            <person name="Chapman J.C."/>
            <person name="Clark S.Y."/>
            <person name="Clarke G."/>
            <person name="Clee C."/>
            <person name="Cobley V."/>
            <person name="Collier R.E."/>
            <person name="Corby N."/>
            <person name="Coville G.J."/>
            <person name="Davies J."/>
            <person name="Deadman R."/>
            <person name="Dunn M."/>
            <person name="Earthrowl M."/>
            <person name="Ellington A.G."/>
            <person name="Errington H."/>
            <person name="Frankish A."/>
            <person name="Frankland J."/>
            <person name="French L."/>
            <person name="Garner P."/>
            <person name="Garnett J."/>
            <person name="Gay L."/>
            <person name="Ghori M.R.J."/>
            <person name="Gibson R."/>
            <person name="Gilby L.M."/>
            <person name="Gillett W."/>
            <person name="Glithero R.J."/>
            <person name="Grafham D.V."/>
            <person name="Griffiths C."/>
            <person name="Griffiths-Jones S."/>
            <person name="Grocock R."/>
            <person name="Hammond S."/>
            <person name="Harrison E.S.I."/>
            <person name="Hart E."/>
            <person name="Haugen E."/>
            <person name="Heath P.D."/>
            <person name="Holmes S."/>
            <person name="Holt K."/>
            <person name="Howden P.J."/>
            <person name="Hunt A.R."/>
            <person name="Hunt S.E."/>
            <person name="Hunter G."/>
            <person name="Isherwood J."/>
            <person name="James R."/>
            <person name="Johnson C."/>
            <person name="Johnson D."/>
            <person name="Joy A."/>
            <person name="Kay M."/>
            <person name="Kershaw J.K."/>
            <person name="Kibukawa M."/>
            <person name="Kimberley A.M."/>
            <person name="King A."/>
            <person name="Knights A.J."/>
            <person name="Lad H."/>
            <person name="Laird G."/>
            <person name="Lawlor S."/>
            <person name="Leongamornlert D.A."/>
            <person name="Lloyd D.M."/>
            <person name="Loveland J."/>
            <person name="Lovell J."/>
            <person name="Lush M.J."/>
            <person name="Lyne R."/>
            <person name="Martin S."/>
            <person name="Mashreghi-Mohammadi M."/>
            <person name="Matthews L."/>
            <person name="Matthews N.S.W."/>
            <person name="McLaren S."/>
            <person name="Milne S."/>
            <person name="Mistry S."/>
            <person name="Moore M.J.F."/>
            <person name="Nickerson T."/>
            <person name="O'Dell C.N."/>
            <person name="Oliver K."/>
            <person name="Palmeiri A."/>
            <person name="Palmer S.A."/>
            <person name="Parker A."/>
            <person name="Patel D."/>
            <person name="Pearce A.V."/>
            <person name="Peck A.I."/>
            <person name="Pelan S."/>
            <person name="Phelps K."/>
            <person name="Phillimore B.J."/>
            <person name="Plumb R."/>
            <person name="Rajan J."/>
            <person name="Raymond C."/>
            <person name="Rouse G."/>
            <person name="Saenphimmachak C."/>
            <person name="Sehra H.K."/>
            <person name="Sheridan E."/>
            <person name="Shownkeen R."/>
            <person name="Sims S."/>
            <person name="Skuce C.D."/>
            <person name="Smith M."/>
            <person name="Steward C."/>
            <person name="Subramanian S."/>
            <person name="Sycamore N."/>
            <person name="Tracey A."/>
            <person name="Tromans A."/>
            <person name="Van Helmond Z."/>
            <person name="Wall M."/>
            <person name="Wallis J.M."/>
            <person name="White S."/>
            <person name="Whitehead S.L."/>
            <person name="Wilkinson J.E."/>
            <person name="Willey D.L."/>
            <person name="Williams H."/>
            <person name="Wilming L."/>
            <person name="Wray P.W."/>
            <person name="Wu Z."/>
            <person name="Coulson A."/>
            <person name="Vaudin M."/>
            <person name="Sulston J.E."/>
            <person name="Durbin R.M."/>
            <person name="Hubbard T."/>
            <person name="Wooster R."/>
            <person name="Dunham I."/>
            <person name="Carter N.P."/>
            <person name="McVean G."/>
            <person name="Ross M.T."/>
            <person name="Harrow J."/>
            <person name="Olson M.V."/>
            <person name="Beck S."/>
            <person name="Rogers J."/>
            <person name="Bentley D.R."/>
        </authorList>
    </citation>
    <scope>NUCLEOTIDE SEQUENCE [LARGE SCALE GENOMIC DNA]</scope>
</reference>
<reference key="4">
    <citation type="submission" date="2005-09" db="EMBL/GenBank/DDBJ databases">
        <authorList>
            <person name="Mural R.J."/>
            <person name="Istrail S."/>
            <person name="Sutton G.G."/>
            <person name="Florea L."/>
            <person name="Halpern A.L."/>
            <person name="Mobarry C.M."/>
            <person name="Lippert R."/>
            <person name="Walenz B."/>
            <person name="Shatkay H."/>
            <person name="Dew I."/>
            <person name="Miller J.R."/>
            <person name="Flanigan M.J."/>
            <person name="Edwards N.J."/>
            <person name="Bolanos R."/>
            <person name="Fasulo D."/>
            <person name="Halldorsson B.V."/>
            <person name="Hannenhalli S."/>
            <person name="Turner R."/>
            <person name="Yooseph S."/>
            <person name="Lu F."/>
            <person name="Nusskern D.R."/>
            <person name="Shue B.C."/>
            <person name="Zheng X.H."/>
            <person name="Zhong F."/>
            <person name="Delcher A.L."/>
            <person name="Huson D.H."/>
            <person name="Kravitz S.A."/>
            <person name="Mouchard L."/>
            <person name="Reinert K."/>
            <person name="Remington K.A."/>
            <person name="Clark A.G."/>
            <person name="Waterman M.S."/>
            <person name="Eichler E.E."/>
            <person name="Adams M.D."/>
            <person name="Hunkapiller M.W."/>
            <person name="Myers E.W."/>
            <person name="Venter J.C."/>
        </authorList>
    </citation>
    <scope>NUCLEOTIDE SEQUENCE [LARGE SCALE GENOMIC DNA]</scope>
</reference>
<reference key="5">
    <citation type="journal article" date="2004" name="Genome Res.">
        <title>The status, quality, and expansion of the NIH full-length cDNA project: the Mammalian Gene Collection (MGC).</title>
        <authorList>
            <consortium name="The MGC Project Team"/>
        </authorList>
    </citation>
    <scope>NUCLEOTIDE SEQUENCE [LARGE SCALE MRNA] (ISOFORM 1)</scope>
    <source>
        <tissue>Skeletal muscle</tissue>
    </source>
</reference>
<reference key="6">
    <citation type="journal article" date="2010" name="Circ. Res.">
        <title>Myomasp/LRRC39, a heart- and muscle-specific protein, is a novel component of the sarcomeric M-band and is involved in stretch sensing.</title>
        <authorList>
            <person name="Will R.D."/>
            <person name="Eden M."/>
            <person name="Just S."/>
            <person name="Hansen A."/>
            <person name="Eder A."/>
            <person name="Frank D."/>
            <person name="Kuhn C."/>
            <person name="Seeger T.S."/>
            <person name="Oehl U."/>
            <person name="Wiemann S."/>
            <person name="Korn B."/>
            <person name="Koegl M."/>
            <person name="Rottbauer W."/>
            <person name="Eschenhagen T."/>
            <person name="Katus H.A."/>
            <person name="Frey N."/>
        </authorList>
    </citation>
    <scope>INTERACTION WITH MYH7</scope>
    <scope>TISSUE SPECIFICITY</scope>
</reference>
<accession>Q96DD0</accession>
<accession>B3KUD2</accession>
<accession>D3DT56</accession>
<accession>Q5VVK7</accession>
<evidence type="ECO:0000250" key="1">
    <source>
        <dbReference type="UniProtKB" id="D3ZXS4"/>
    </source>
</evidence>
<evidence type="ECO:0000255" key="2"/>
<evidence type="ECO:0000269" key="3">
    <source>
    </source>
</evidence>
<evidence type="ECO:0000303" key="4">
    <source>
    </source>
</evidence>
<evidence type="ECO:0000305" key="5"/>
<organism>
    <name type="scientific">Homo sapiens</name>
    <name type="common">Human</name>
    <dbReference type="NCBI Taxonomy" id="9606"/>
    <lineage>
        <taxon>Eukaryota</taxon>
        <taxon>Metazoa</taxon>
        <taxon>Chordata</taxon>
        <taxon>Craniata</taxon>
        <taxon>Vertebrata</taxon>
        <taxon>Euteleostomi</taxon>
        <taxon>Mammalia</taxon>
        <taxon>Eutheria</taxon>
        <taxon>Euarchontoglires</taxon>
        <taxon>Primates</taxon>
        <taxon>Haplorrhini</taxon>
        <taxon>Catarrhini</taxon>
        <taxon>Hominidae</taxon>
        <taxon>Homo</taxon>
    </lineage>
</organism>
<name>LRC39_HUMAN</name>
<dbReference type="EMBL" id="AY358131">
    <property type="protein sequence ID" value="AAQ88498.1"/>
    <property type="molecule type" value="mRNA"/>
</dbReference>
<dbReference type="EMBL" id="AK096892">
    <property type="protein sequence ID" value="BAG53394.1"/>
    <property type="molecule type" value="mRNA"/>
</dbReference>
<dbReference type="EMBL" id="AL445928">
    <property type="status" value="NOT_ANNOTATED_CDS"/>
    <property type="molecule type" value="Genomic_DNA"/>
</dbReference>
<dbReference type="EMBL" id="CH471097">
    <property type="protein sequence ID" value="EAW72965.1"/>
    <property type="molecule type" value="Genomic_DNA"/>
</dbReference>
<dbReference type="EMBL" id="CH471097">
    <property type="protein sequence ID" value="EAW72966.1"/>
    <property type="molecule type" value="Genomic_DNA"/>
</dbReference>
<dbReference type="EMBL" id="CH471097">
    <property type="protein sequence ID" value="EAW72968.1"/>
    <property type="molecule type" value="Genomic_DNA"/>
</dbReference>
<dbReference type="EMBL" id="CH471097">
    <property type="protein sequence ID" value="EAW72969.1"/>
    <property type="molecule type" value="Genomic_DNA"/>
</dbReference>
<dbReference type="EMBL" id="BC009613">
    <property type="protein sequence ID" value="AAH09613.1"/>
    <property type="molecule type" value="mRNA"/>
</dbReference>
<dbReference type="CCDS" id="CCDS58014.1">
    <molecule id="Q96DD0-2"/>
</dbReference>
<dbReference type="CCDS" id="CCDS766.1">
    <molecule id="Q96DD0-1"/>
</dbReference>
<dbReference type="RefSeq" id="NP_001243314.1">
    <molecule id="Q96DD0-2"/>
    <property type="nucleotide sequence ID" value="NM_001256385.2"/>
</dbReference>
<dbReference type="RefSeq" id="NP_001243315.1">
    <molecule id="Q96DD0-1"/>
    <property type="nucleotide sequence ID" value="NM_001256386.2"/>
</dbReference>
<dbReference type="RefSeq" id="NP_001243316.1">
    <molecule id="Q96DD0-1"/>
    <property type="nucleotide sequence ID" value="NM_001256387.2"/>
</dbReference>
<dbReference type="RefSeq" id="NP_653221.1">
    <molecule id="Q96DD0-1"/>
    <property type="nucleotide sequence ID" value="NM_144620.4"/>
</dbReference>
<dbReference type="RefSeq" id="XP_047301478.1">
    <molecule id="Q96DD0-1"/>
    <property type="nucleotide sequence ID" value="XM_047445522.1"/>
</dbReference>
<dbReference type="RefSeq" id="XP_054190314.1">
    <molecule id="Q96DD0-1"/>
    <property type="nucleotide sequence ID" value="XM_054334339.1"/>
</dbReference>
<dbReference type="SMR" id="Q96DD0"/>
<dbReference type="BioGRID" id="126062">
    <property type="interactions" value="11"/>
</dbReference>
<dbReference type="FunCoup" id="Q96DD0">
    <property type="interactions" value="14"/>
</dbReference>
<dbReference type="IntAct" id="Q96DD0">
    <property type="interactions" value="16"/>
</dbReference>
<dbReference type="STRING" id="9606.ENSP00000480740"/>
<dbReference type="iPTMnet" id="Q96DD0"/>
<dbReference type="PhosphoSitePlus" id="Q96DD0"/>
<dbReference type="BioMuta" id="LRRC39"/>
<dbReference type="DMDM" id="74760781"/>
<dbReference type="jPOST" id="Q96DD0"/>
<dbReference type="MassIVE" id="Q96DD0"/>
<dbReference type="PaxDb" id="9606-ENSP00000480740"/>
<dbReference type="PeptideAtlas" id="Q96DD0"/>
<dbReference type="ProteomicsDB" id="76280">
    <molecule id="Q96DD0-1"/>
</dbReference>
<dbReference type="ProteomicsDB" id="76281">
    <molecule id="Q96DD0-2"/>
</dbReference>
<dbReference type="Antibodypedia" id="33693">
    <property type="antibodies" value="180 antibodies from 19 providers"/>
</dbReference>
<dbReference type="DNASU" id="127495"/>
<dbReference type="Ensembl" id="ENST00000342895.8">
    <molecule id="Q96DD0-1"/>
    <property type="protein sequence ID" value="ENSP00000344470.3"/>
    <property type="gene ID" value="ENSG00000122477.14"/>
</dbReference>
<dbReference type="Ensembl" id="ENST00000370137.6">
    <molecule id="Q96DD0-1"/>
    <property type="protein sequence ID" value="ENSP00000359156.1"/>
    <property type="gene ID" value="ENSG00000122477.14"/>
</dbReference>
<dbReference type="Ensembl" id="ENST00000370138.1">
    <molecule id="Q96DD0-2"/>
    <property type="protein sequence ID" value="ENSP00000359157.1"/>
    <property type="gene ID" value="ENSG00000122477.14"/>
</dbReference>
<dbReference type="GeneID" id="127495"/>
<dbReference type="KEGG" id="hsa:127495"/>
<dbReference type="MANE-Select" id="ENST00000370137.6">
    <property type="protein sequence ID" value="ENSP00000359156.1"/>
    <property type="RefSeq nucleotide sequence ID" value="NM_144620.4"/>
    <property type="RefSeq protein sequence ID" value="NP_653221.1"/>
</dbReference>
<dbReference type="UCSC" id="uc001dsw.3">
    <molecule id="Q96DD0-1"/>
    <property type="organism name" value="human"/>
</dbReference>
<dbReference type="AGR" id="HGNC:28228"/>
<dbReference type="CTD" id="127495"/>
<dbReference type="DisGeNET" id="127495"/>
<dbReference type="GeneCards" id="LRRC39"/>
<dbReference type="HGNC" id="HGNC:28228">
    <property type="gene designation" value="LRRC39"/>
</dbReference>
<dbReference type="HPA" id="ENSG00000122477">
    <property type="expression patterns" value="Tissue enhanced (heart muscle, retina, skeletal muscle, tongue)"/>
</dbReference>
<dbReference type="neXtProt" id="NX_Q96DD0"/>
<dbReference type="OpenTargets" id="ENSG00000122477"/>
<dbReference type="PharmGKB" id="PA142671527"/>
<dbReference type="VEuPathDB" id="HostDB:ENSG00000122477"/>
<dbReference type="eggNOG" id="KOG0619">
    <property type="taxonomic scope" value="Eukaryota"/>
</dbReference>
<dbReference type="GeneTree" id="ENSGT00940000158998"/>
<dbReference type="HOGENOM" id="CLU_000288_18_8_1"/>
<dbReference type="InParanoid" id="Q96DD0"/>
<dbReference type="OMA" id="DMPALEW"/>
<dbReference type="OrthoDB" id="442066at2759"/>
<dbReference type="PAN-GO" id="Q96DD0">
    <property type="GO annotations" value="4 GO annotations based on evolutionary models"/>
</dbReference>
<dbReference type="PhylomeDB" id="Q96DD0"/>
<dbReference type="TreeFam" id="TF333627"/>
<dbReference type="PathwayCommons" id="Q96DD0"/>
<dbReference type="SignaLink" id="Q96DD0"/>
<dbReference type="BioGRID-ORCS" id="127495">
    <property type="hits" value="20 hits in 1146 CRISPR screens"/>
</dbReference>
<dbReference type="ChiTaRS" id="LRRC39">
    <property type="organism name" value="human"/>
</dbReference>
<dbReference type="GeneWiki" id="LRRC39"/>
<dbReference type="GenomeRNAi" id="127495"/>
<dbReference type="Pharos" id="Q96DD0">
    <property type="development level" value="Tdark"/>
</dbReference>
<dbReference type="PRO" id="PR:Q96DD0"/>
<dbReference type="Proteomes" id="UP000005640">
    <property type="component" value="Chromosome 1"/>
</dbReference>
<dbReference type="RNAct" id="Q96DD0">
    <property type="molecule type" value="protein"/>
</dbReference>
<dbReference type="Bgee" id="ENSG00000122477">
    <property type="expression patterns" value="Expressed in vastus lateralis and 122 other cell types or tissues"/>
</dbReference>
<dbReference type="GO" id="GO:0031430">
    <property type="term" value="C:M band"/>
    <property type="evidence" value="ECO:0007669"/>
    <property type="project" value="UniProtKB-SubCell"/>
</dbReference>
<dbReference type="GO" id="GO:0035556">
    <property type="term" value="P:intracellular signal transduction"/>
    <property type="evidence" value="ECO:0000318"/>
    <property type="project" value="GO_Central"/>
</dbReference>
<dbReference type="FunFam" id="3.80.10.10:FF:000248">
    <property type="entry name" value="Leucine rich repeat containing 39"/>
    <property type="match status" value="1"/>
</dbReference>
<dbReference type="FunFam" id="3.80.10.10:FF:000249">
    <property type="entry name" value="Leucine rich repeat containing 39"/>
    <property type="match status" value="1"/>
</dbReference>
<dbReference type="Gene3D" id="3.80.10.10">
    <property type="entry name" value="Ribonuclease Inhibitor"/>
    <property type="match status" value="2"/>
</dbReference>
<dbReference type="InterPro" id="IPR001611">
    <property type="entry name" value="Leu-rich_rpt"/>
</dbReference>
<dbReference type="InterPro" id="IPR003591">
    <property type="entry name" value="Leu-rich_rpt_typical-subtyp"/>
</dbReference>
<dbReference type="InterPro" id="IPR032675">
    <property type="entry name" value="LRR_dom_sf"/>
</dbReference>
<dbReference type="InterPro" id="IPR050216">
    <property type="entry name" value="LRR_domain-containing"/>
</dbReference>
<dbReference type="InterPro" id="IPR055414">
    <property type="entry name" value="LRR_R13L4/SHOC2-like"/>
</dbReference>
<dbReference type="PANTHER" id="PTHR48051">
    <property type="match status" value="1"/>
</dbReference>
<dbReference type="PANTHER" id="PTHR48051:SF2">
    <property type="entry name" value="LEUCINE RICH REPEAT CONTAINING 39"/>
    <property type="match status" value="1"/>
</dbReference>
<dbReference type="Pfam" id="PF23598">
    <property type="entry name" value="LRR_14"/>
    <property type="match status" value="1"/>
</dbReference>
<dbReference type="Pfam" id="PF13855">
    <property type="entry name" value="LRR_8"/>
    <property type="match status" value="1"/>
</dbReference>
<dbReference type="SMART" id="SM00369">
    <property type="entry name" value="LRR_TYP"/>
    <property type="match status" value="6"/>
</dbReference>
<dbReference type="SUPFAM" id="SSF52047">
    <property type="entry name" value="RNI-like"/>
    <property type="match status" value="1"/>
</dbReference>
<dbReference type="PROSITE" id="PS51450">
    <property type="entry name" value="LRR"/>
    <property type="match status" value="7"/>
</dbReference>
<feature type="chain" id="PRO_0000232580" description="Leucine-rich repeat-containing protein 39">
    <location>
        <begin position="1"/>
        <end position="335"/>
    </location>
</feature>
<feature type="repeat" description="LRR 1">
    <location>
        <begin position="84"/>
        <end position="105"/>
    </location>
</feature>
<feature type="repeat" description="LRR 2">
    <location>
        <begin position="107"/>
        <end position="128"/>
    </location>
</feature>
<feature type="repeat" description="LRR 3">
    <location>
        <begin position="130"/>
        <end position="151"/>
    </location>
</feature>
<feature type="repeat" description="LRR 4">
    <location>
        <begin position="153"/>
        <end position="176"/>
    </location>
</feature>
<feature type="repeat" description="LRR 5">
    <location>
        <begin position="177"/>
        <end position="197"/>
    </location>
</feature>
<feature type="repeat" description="LRR 6">
    <location>
        <begin position="200"/>
        <end position="221"/>
    </location>
</feature>
<feature type="repeat" description="LRR 7">
    <location>
        <begin position="223"/>
        <end position="244"/>
    </location>
</feature>
<feature type="repeat" description="LRR 8">
    <location>
        <begin position="246"/>
        <end position="267"/>
    </location>
</feature>
<feature type="repeat" description="LRR 9">
    <location>
        <begin position="269"/>
        <end position="290"/>
    </location>
</feature>
<feature type="coiled-coil region" evidence="2">
    <location>
        <begin position="10"/>
        <end position="47"/>
    </location>
</feature>
<feature type="splice variant" id="VSP_017913" description="In isoform 2." evidence="5">
    <original>DHQVNGSTTLPISINTDG</original>
    <variation>ALQFCVCHGQILTIYTCMALEI</variation>
    <location>
        <begin position="318"/>
        <end position="335"/>
    </location>
</feature>
<feature type="sequence variant" id="VAR_034087" description="In dbSNP:rs34920283.">
    <original>I</original>
    <variation>L</variation>
    <location>
        <position position="121"/>
    </location>
</feature>
<protein>
    <recommendedName>
        <fullName evidence="5">Leucine-rich repeat-containing protein 39</fullName>
    </recommendedName>
    <alternativeName>
        <fullName evidence="4">Myosin-interacting M-band-associated stress-responsive protein</fullName>
        <shortName evidence="4">Myomasp</shortName>
    </alternativeName>
</protein>
<keyword id="KW-0025">Alternative splicing</keyword>
<keyword id="KW-0175">Coiled coil</keyword>
<keyword id="KW-0963">Cytoplasm</keyword>
<keyword id="KW-0433">Leucine-rich repeat</keyword>
<keyword id="KW-0514">Muscle protein</keyword>
<keyword id="KW-1267">Proteomics identification</keyword>
<keyword id="KW-1185">Reference proteome</keyword>
<keyword id="KW-0677">Repeat</keyword>
<gene>
    <name type="primary">LRRC39</name>
    <name type="ORF">UNQ6500/PRO21368</name>
</gene>
<comment type="function">
    <text evidence="1">Component of the sarcomeric M-band which plays a role in myocyte response to biomechanical stress. May regulate expression of other M-band proteins via an SRF-dependent pathway. Important for normal contractile function in heart.</text>
</comment>
<comment type="subunit">
    <text evidence="3">Interacts with MYH7 (via C-terminus).</text>
</comment>
<comment type="interaction">
    <interactant intactId="EBI-9539130">
        <id>Q96DD0</id>
    </interactant>
    <interactant intactId="EBI-519141">
        <id>P12883</id>
        <label>MYH7</label>
    </interactant>
    <organismsDiffer>false</organismsDiffer>
    <experiments>3</experiments>
</comment>
<comment type="subcellular location">
    <subcellularLocation>
        <location evidence="1">Cytoplasm</location>
        <location evidence="1">Myofibril</location>
        <location evidence="1">Sarcomere</location>
        <location evidence="1">M line</location>
    </subcellularLocation>
</comment>
<comment type="alternative products">
    <event type="alternative splicing"/>
    <isoform>
        <id>Q96DD0-1</id>
        <name>1</name>
        <sequence type="displayed"/>
    </isoform>
    <isoform>
        <id>Q96DD0-2</id>
        <name>2</name>
        <sequence type="described" ref="VSP_017913"/>
    </isoform>
</comment>
<comment type="tissue specificity">
    <text evidence="3">Highly expressed in skeletal muscle and heart. Not detected in other tissues tested.</text>
</comment>
<sequence length="335" mass="38793">MTENVVCTGAVNAVKEVWEKRIKKLNEDLKREKEFQHKLVRIWEERVSLTKLREKVTREDGRVILKIEKEEWKTLPSSLLKLNQLQEWQLHRTGLLKIPEFIGRFQNLIVLDLSRNTISEIPPGIGLLTRLQELILSYNKIKTVPKELSNCASLEKLELAVNRDICDLPQELSNLLKLTHLDLSMNDFTTIPLAVLNMPALEWLDMGSNKLEQLPDTIERMQNLHTLWLQRNEITCLPQTISNMKNLGTLVLSNNKLQDIPVCMEEMANLRFVNFRDNPLKLKVSLPPSEGTDEEEERELFGLQFMHTYIQESRRRADHQVNGSTTLPISINTDG</sequence>